<reference key="1">
    <citation type="journal article" date="1990" name="Mol. Biochem. Parasitol.">
        <title>Differential expression of a family of putative adenylate/guanylate cyclase genes in Trypanosoma brucei.</title>
        <authorList>
            <person name="Alexandre S."/>
            <person name="Paindavione P."/>
            <person name="Tebabi P."/>
            <person name="Pays A."/>
            <person name="Halleux S."/>
            <person name="Steinert M."/>
            <person name="Pays E."/>
        </authorList>
    </citation>
    <scope>NUCLEOTIDE SEQUENCE [MRNA]</scope>
    <source>
        <strain>EATRO 1125</strain>
    </source>
</reference>
<dbReference type="EC" id="4.6.1.1"/>
<dbReference type="EMBL" id="X52119">
    <property type="protein sequence ID" value="CAA36364.1"/>
    <property type="molecule type" value="mRNA"/>
</dbReference>
<dbReference type="PIR" id="S14201">
    <property type="entry name" value="S14201"/>
</dbReference>
<dbReference type="PDB" id="1FX2">
    <property type="method" value="X-ray"/>
    <property type="resolution" value="1.46 A"/>
    <property type="chains" value="A=888-1122"/>
</dbReference>
<dbReference type="PDBsum" id="1FX2"/>
<dbReference type="SMR" id="Q99279"/>
<dbReference type="GlyCosmos" id="Q99279">
    <property type="glycosylation" value="11 sites, No reported glycans"/>
</dbReference>
<dbReference type="EvolutionaryTrace" id="Q99279"/>
<dbReference type="GO" id="GO:0016020">
    <property type="term" value="C:membrane"/>
    <property type="evidence" value="ECO:0007669"/>
    <property type="project" value="UniProtKB-SubCell"/>
</dbReference>
<dbReference type="GO" id="GO:0004016">
    <property type="term" value="F:adenylate cyclase activity"/>
    <property type="evidence" value="ECO:0007669"/>
    <property type="project" value="UniProtKB-EC"/>
</dbReference>
<dbReference type="GO" id="GO:0005524">
    <property type="term" value="F:ATP binding"/>
    <property type="evidence" value="ECO:0007669"/>
    <property type="project" value="UniProtKB-KW"/>
</dbReference>
<dbReference type="GO" id="GO:0046872">
    <property type="term" value="F:metal ion binding"/>
    <property type="evidence" value="ECO:0007669"/>
    <property type="project" value="UniProtKB-KW"/>
</dbReference>
<dbReference type="GO" id="GO:0006171">
    <property type="term" value="P:cAMP biosynthetic process"/>
    <property type="evidence" value="ECO:0007669"/>
    <property type="project" value="UniProtKB-KW"/>
</dbReference>
<dbReference type="GO" id="GO:0035556">
    <property type="term" value="P:intracellular signal transduction"/>
    <property type="evidence" value="ECO:0007669"/>
    <property type="project" value="InterPro"/>
</dbReference>
<dbReference type="CDD" id="cd07556">
    <property type="entry name" value="Nucleotidyl_cyc_III"/>
    <property type="match status" value="1"/>
</dbReference>
<dbReference type="FunFam" id="3.30.70.1230:FF:000022">
    <property type="entry name" value="Receptor-type adenylate cyclase GRESAG 4, putative"/>
    <property type="match status" value="1"/>
</dbReference>
<dbReference type="FunFam" id="3.40.50.2300:FF:000162">
    <property type="entry name" value="Receptor-type adenylate cyclase GRESAG 4, putative"/>
    <property type="match status" value="1"/>
</dbReference>
<dbReference type="Gene3D" id="3.40.50.2300">
    <property type="match status" value="1"/>
</dbReference>
<dbReference type="Gene3D" id="3.30.70.1230">
    <property type="entry name" value="Nucleotide cyclase"/>
    <property type="match status" value="1"/>
</dbReference>
<dbReference type="InterPro" id="IPR001054">
    <property type="entry name" value="A/G_cyclase"/>
</dbReference>
<dbReference type="InterPro" id="IPR050697">
    <property type="entry name" value="Adenylyl/Guanylyl_Cyclase_3/4"/>
</dbReference>
<dbReference type="InterPro" id="IPR029787">
    <property type="entry name" value="Nucleotide_cyclase"/>
</dbReference>
<dbReference type="InterPro" id="IPR028082">
    <property type="entry name" value="Peripla_BP_I"/>
</dbReference>
<dbReference type="PANTHER" id="PTHR43081:SF1">
    <property type="entry name" value="ADENYLATE CYCLASE, TERMINAL-DIFFERENTIATION SPECIFIC"/>
    <property type="match status" value="1"/>
</dbReference>
<dbReference type="PANTHER" id="PTHR43081">
    <property type="entry name" value="ADENYLATE CYCLASE, TERMINAL-DIFFERENTIATION SPECIFIC-RELATED"/>
    <property type="match status" value="1"/>
</dbReference>
<dbReference type="Pfam" id="PF00211">
    <property type="entry name" value="Guanylate_cyc"/>
    <property type="match status" value="1"/>
</dbReference>
<dbReference type="Pfam" id="PF25493">
    <property type="entry name" value="Peripla_BP_A-cyclase"/>
    <property type="match status" value="1"/>
</dbReference>
<dbReference type="Pfam" id="PF25495">
    <property type="entry name" value="Peripla_BP_A-cyclase_1"/>
    <property type="match status" value="1"/>
</dbReference>
<dbReference type="SMART" id="SM00044">
    <property type="entry name" value="CYCc"/>
    <property type="match status" value="1"/>
</dbReference>
<dbReference type="SUPFAM" id="SSF55073">
    <property type="entry name" value="Nucleotide cyclase"/>
    <property type="match status" value="1"/>
</dbReference>
<dbReference type="SUPFAM" id="SSF53822">
    <property type="entry name" value="Periplasmic binding protein-like I"/>
    <property type="match status" value="1"/>
</dbReference>
<dbReference type="PROSITE" id="PS50125">
    <property type="entry name" value="GUANYLATE_CYCLASE_2"/>
    <property type="match status" value="1"/>
</dbReference>
<evidence type="ECO:0000255" key="1"/>
<evidence type="ECO:0000255" key="2">
    <source>
        <dbReference type="PROSITE-ProRule" id="PRU00099"/>
    </source>
</evidence>
<evidence type="ECO:0000305" key="3"/>
<evidence type="ECO:0007829" key="4">
    <source>
        <dbReference type="PDB" id="1FX2"/>
    </source>
</evidence>
<gene>
    <name type="primary">GRESAG 4.1</name>
</gene>
<feature type="chain" id="PRO_0000195737" description="Receptor-type adenylate cyclase GRESAG 4.1">
    <location>
        <begin position="1"/>
        <end position="1242"/>
    </location>
</feature>
<feature type="topological domain" description="Cytoplasmic" evidence="1">
    <location>
        <begin position="1"/>
        <end position="39"/>
    </location>
</feature>
<feature type="transmembrane region" description="Helical" evidence="1">
    <location>
        <begin position="40"/>
        <end position="60"/>
    </location>
</feature>
<feature type="topological domain" description="Extracellular" evidence="1">
    <location>
        <begin position="61"/>
        <end position="862"/>
    </location>
</feature>
<feature type="transmembrane region" description="Helical" evidence="1">
    <location>
        <begin position="863"/>
        <end position="883"/>
    </location>
</feature>
<feature type="topological domain" description="Cytoplasmic" evidence="1">
    <location>
        <begin position="884"/>
        <end position="1242"/>
    </location>
</feature>
<feature type="domain" description="Guanylate cyclase" evidence="2">
    <location>
        <begin position="901"/>
        <end position="1056"/>
    </location>
</feature>
<feature type="binding site" evidence="2">
    <location>
        <position position="906"/>
    </location>
    <ligand>
        <name>Mg(2+)</name>
        <dbReference type="ChEBI" id="CHEBI:18420"/>
    </ligand>
</feature>
<feature type="binding site" evidence="2">
    <location>
        <position position="949"/>
    </location>
    <ligand>
        <name>Mg(2+)</name>
        <dbReference type="ChEBI" id="CHEBI:18420"/>
    </ligand>
</feature>
<feature type="glycosylation site" description="N-linked (GlcNAc...) asparagine" evidence="1">
    <location>
        <position position="116"/>
    </location>
</feature>
<feature type="glycosylation site" description="N-linked (GlcNAc...) asparagine" evidence="1">
    <location>
        <position position="289"/>
    </location>
</feature>
<feature type="glycosylation site" description="N-linked (GlcNAc...) asparagine" evidence="1">
    <location>
        <position position="318"/>
    </location>
</feature>
<feature type="glycosylation site" description="N-linked (GlcNAc...) asparagine" evidence="1">
    <location>
        <position position="338"/>
    </location>
</feature>
<feature type="glycosylation site" description="N-linked (GlcNAc...) asparagine" evidence="1">
    <location>
        <position position="401"/>
    </location>
</feature>
<feature type="glycosylation site" description="N-linked (GlcNAc...) asparagine" evidence="1">
    <location>
        <position position="534"/>
    </location>
</feature>
<feature type="glycosylation site" description="N-linked (GlcNAc...) asparagine" evidence="1">
    <location>
        <position position="563"/>
    </location>
</feature>
<feature type="glycosylation site" description="N-linked (GlcNAc...) asparagine" evidence="1">
    <location>
        <position position="603"/>
    </location>
</feature>
<feature type="glycosylation site" description="N-linked (GlcNAc...) asparagine" evidence="1">
    <location>
        <position position="702"/>
    </location>
</feature>
<feature type="glycosylation site" description="N-linked (GlcNAc...) asparagine" evidence="1">
    <location>
        <position position="741"/>
    </location>
</feature>
<feature type="glycosylation site" description="N-linked (GlcNAc...) asparagine" evidence="1">
    <location>
        <position position="818"/>
    </location>
</feature>
<feature type="helix" evidence="4">
    <location>
        <begin position="889"/>
        <end position="891"/>
    </location>
</feature>
<feature type="strand" evidence="4">
    <location>
        <begin position="900"/>
        <end position="907"/>
    </location>
</feature>
<feature type="helix" evidence="4">
    <location>
        <begin position="910"/>
        <end position="916"/>
    </location>
</feature>
<feature type="turn" evidence="4">
    <location>
        <begin position="918"/>
        <end position="920"/>
    </location>
</feature>
<feature type="helix" evidence="4">
    <location>
        <begin position="921"/>
        <end position="938"/>
    </location>
</feature>
<feature type="strand" evidence="4">
    <location>
        <begin position="942"/>
        <end position="947"/>
    </location>
</feature>
<feature type="strand" evidence="4">
    <location>
        <begin position="950"/>
        <end position="956"/>
    </location>
</feature>
<feature type="helix" evidence="4">
    <location>
        <begin position="958"/>
        <end position="974"/>
    </location>
</feature>
<feature type="helix" evidence="4">
    <location>
        <begin position="981"/>
        <end position="996"/>
    </location>
</feature>
<feature type="helix" evidence="4">
    <location>
        <begin position="1009"/>
        <end position="1015"/>
    </location>
</feature>
<feature type="strand" evidence="4">
    <location>
        <begin position="1021"/>
        <end position="1028"/>
    </location>
</feature>
<feature type="strand" evidence="4">
    <location>
        <begin position="1039"/>
        <end position="1046"/>
    </location>
</feature>
<feature type="helix" evidence="4">
    <location>
        <begin position="1047"/>
        <end position="1057"/>
    </location>
</feature>
<feature type="strand" evidence="4">
    <location>
        <begin position="1064"/>
        <end position="1067"/>
    </location>
</feature>
<feature type="helix" evidence="4">
    <location>
        <begin position="1068"/>
        <end position="1072"/>
    </location>
</feature>
<feature type="helix" evidence="4">
    <location>
        <begin position="1076"/>
        <end position="1080"/>
    </location>
</feature>
<feature type="strand" evidence="4">
    <location>
        <begin position="1084"/>
        <end position="1090"/>
    </location>
</feature>
<feature type="strand" evidence="4">
    <location>
        <begin position="1099"/>
        <end position="1104"/>
    </location>
</feature>
<protein>
    <recommendedName>
        <fullName>Receptor-type adenylate cyclase GRESAG 4.1</fullName>
        <ecNumber>4.6.1.1</ecNumber>
    </recommendedName>
    <alternativeName>
        <fullName>ATP pyrophosphate-lyase</fullName>
    </alternativeName>
    <alternativeName>
        <fullName>Adenylyl cyclase</fullName>
    </alternativeName>
</protein>
<sequence length="1242" mass="138158">MHWQEGGGRGCVYTHGNCRRNLTARALQALQHVEALTCHYCVSLLHLLPLLLMWMPPVCADDSAVTVNVLSMMYNPEYYVEKVNAINAGFDASLSAHGWKTGSGATISVIRPPSYNTTAEDIFQLGVKQSEGKLLVVFGPLGTDPVVWVRDKLKENDLVAIAPIAYSSEVRGWNPHLYSISVEPNAELLALIRYAVVYLGLPRVGLMYAKGNGFDKESYEFTMRIMEIMGRKPCGVFAVESSGGRDVLEGQLNTKWGQFVATRPQAVLLFSSLEEETTGWFVKKIAQDNRTVDMYLLAPSSFQHFLIKTWSDALVSLNRTFTPGQLITTGTVPLASDNRSSMVRHFQRDMDNYLDTNSDWKGFAKPEHYLKDDKLGEMMVFGWLAGEVLFEALNNAPQLTNRTSFMESLYKQRRYVIDDFVVGDFGGECDEALHYRVPCVIAIKAAAWTHMRVVDDSLSLKPMKKGSVTWSVSECSSANVQVSAPLIGLYVVLTDDKVAQRASMRWSLGARSIEEADDVDKRIFFHSLKVNLKNLTQSLEQVRDTKAVAAVLGVTADILSVPNMTFIGPIPLFPRLNKFWRNVIHLQPLLAHELYVLAVYLSNTSSTGVKALVRGGEASEVVDTLDKSLVTFGVSLDSSKTLGDGDPMSSYLSGNGDVFCIGLTPPDVAAVARHLQTHLRARVFVPFNDILLFYQEFVAGFNASKESIASSEGLLFATSFPHWGKKNRKSDMVARFHRHVNESHWDPLTFLGFATTRLLQVVISNMRKVNAEPLADRIYTESNIRVDDVGFGPFSDAECVSGTSVSANECASNFGATNISVWSMGACAEFKLAQDTGWDDTVYGLCYSARGSTHTVTDSWNNFWVCIRLVIIYCPWCVPTHLPAERRNNNRAPKEPTDPVTLIFTDIESSTALWAAHPDLMPDAVAAHHRMVRSLIGRYKCYEVKTVGDSFMIASKSPFAAVQLAQELQLCFLHHDWGTNALDDSYREFEEQRAEGECEYTPPTAHMDPEVYSRLWNGLRVRVGIHTGLCDIIRHDEVTKGYDYYGRTPNMAARTESVANGGQVLMTHAAYMSLSAEDRKQIDVTALGDVALRGVSDPVKMYQLNTVPSRNFAALRLDREYFFDEGEDGTTTSTSDHSSSRADVSESGQIIATALQSLLSTFKTAHREKLLLPYCERWRVPLPRKAASEWDDAYCEEVVRRIAVKVGRVADHGADSGSESSSTQGSSSIIIVPFYDMHLQEY</sequence>
<proteinExistence type="evidence at protein level"/>
<comment type="function">
    <text>Could act as a receptor for an unknown ligand.</text>
</comment>
<comment type="catalytic activity">
    <reaction>
        <text>ATP = 3',5'-cyclic AMP + diphosphate</text>
        <dbReference type="Rhea" id="RHEA:15389"/>
        <dbReference type="ChEBI" id="CHEBI:30616"/>
        <dbReference type="ChEBI" id="CHEBI:33019"/>
        <dbReference type="ChEBI" id="CHEBI:58165"/>
        <dbReference type="EC" id="4.6.1.1"/>
    </reaction>
</comment>
<comment type="cofactor">
    <cofactor>
        <name>Mg(2+)</name>
        <dbReference type="ChEBI" id="CHEBI:18420"/>
    </cofactor>
    <text>Binds 1 Mg(2+) ion per subunit.</text>
</comment>
<comment type="subcellular location">
    <subcellularLocation>
        <location evidence="3">Membrane</location>
        <topology evidence="3">Multi-pass membrane protein</topology>
    </subcellularLocation>
</comment>
<comment type="similarity">
    <text evidence="3">Belongs to the adenylyl cyclase class-3 family.</text>
</comment>
<organism>
    <name type="scientific">Trypanosoma brucei brucei</name>
    <dbReference type="NCBI Taxonomy" id="5702"/>
    <lineage>
        <taxon>Eukaryota</taxon>
        <taxon>Discoba</taxon>
        <taxon>Euglenozoa</taxon>
        <taxon>Kinetoplastea</taxon>
        <taxon>Metakinetoplastina</taxon>
        <taxon>Trypanosomatida</taxon>
        <taxon>Trypanosomatidae</taxon>
        <taxon>Trypanosoma</taxon>
    </lineage>
</organism>
<accession>Q99279</accession>
<keyword id="KW-0002">3D-structure</keyword>
<keyword id="KW-0067">ATP-binding</keyword>
<keyword id="KW-0115">cAMP biosynthesis</keyword>
<keyword id="KW-0325">Glycoprotein</keyword>
<keyword id="KW-0456">Lyase</keyword>
<keyword id="KW-0460">Magnesium</keyword>
<keyword id="KW-0472">Membrane</keyword>
<keyword id="KW-0479">Metal-binding</keyword>
<keyword id="KW-0547">Nucleotide-binding</keyword>
<keyword id="KW-0675">Receptor</keyword>
<keyword id="KW-0812">Transmembrane</keyword>
<keyword id="KW-1133">Transmembrane helix</keyword>
<name>CY41_TRYBB</name>